<feature type="chain" id="PRO_0000334195" description="Probable ribonuclease FAU-1">
    <location>
        <begin position="1"/>
        <end position="471"/>
    </location>
</feature>
<feature type="domain" description="S1 motif" evidence="1">
    <location>
        <begin position="93"/>
        <end position="139"/>
    </location>
</feature>
<keyword id="KW-0255">Endonuclease</keyword>
<keyword id="KW-0378">Hydrolase</keyword>
<keyword id="KW-0540">Nuclease</keyword>
<keyword id="KW-1185">Reference proteome</keyword>
<keyword id="KW-0694">RNA-binding</keyword>
<keyword id="KW-0698">rRNA processing</keyword>
<gene>
    <name evidence="1" type="primary">fau-1</name>
    <name type="ordered locus">VNG_2627C</name>
</gene>
<evidence type="ECO:0000255" key="1">
    <source>
        <dbReference type="HAMAP-Rule" id="MF_01910"/>
    </source>
</evidence>
<reference key="1">
    <citation type="journal article" date="2000" name="Proc. Natl. Acad. Sci. U.S.A.">
        <title>Genome sequence of Halobacterium species NRC-1.</title>
        <authorList>
            <person name="Ng W.V."/>
            <person name="Kennedy S.P."/>
            <person name="Mahairas G.G."/>
            <person name="Berquist B."/>
            <person name="Pan M."/>
            <person name="Shukla H.D."/>
            <person name="Lasky S.R."/>
            <person name="Baliga N.S."/>
            <person name="Thorsson V."/>
            <person name="Sbrogna J."/>
            <person name="Swartzell S."/>
            <person name="Weir D."/>
            <person name="Hall J."/>
            <person name="Dahl T.A."/>
            <person name="Welti R."/>
            <person name="Goo Y.A."/>
            <person name="Leithauser B."/>
            <person name="Keller K."/>
            <person name="Cruz R."/>
            <person name="Danson M.J."/>
            <person name="Hough D.W."/>
            <person name="Maddocks D.G."/>
            <person name="Jablonski P.E."/>
            <person name="Krebs M.P."/>
            <person name="Angevine C.M."/>
            <person name="Dale H."/>
            <person name="Isenbarger T.A."/>
            <person name="Peck R.F."/>
            <person name="Pohlschroder M."/>
            <person name="Spudich J.L."/>
            <person name="Jung K.-H."/>
            <person name="Alam M."/>
            <person name="Freitas T."/>
            <person name="Hou S."/>
            <person name="Daniels C.J."/>
            <person name="Dennis P.P."/>
            <person name="Omer A.D."/>
            <person name="Ebhardt H."/>
            <person name="Lowe T.M."/>
            <person name="Liang P."/>
            <person name="Riley M."/>
            <person name="Hood L."/>
            <person name="DasSarma S."/>
        </authorList>
    </citation>
    <scope>NUCLEOTIDE SEQUENCE [LARGE SCALE GENOMIC DNA]</scope>
    <source>
        <strain>ATCC 700922 / JCM 11081 / NRC-1</strain>
    </source>
</reference>
<organism>
    <name type="scientific">Halobacterium salinarum (strain ATCC 700922 / JCM 11081 / NRC-1)</name>
    <name type="common">Halobacterium halobium</name>
    <dbReference type="NCBI Taxonomy" id="64091"/>
    <lineage>
        <taxon>Archaea</taxon>
        <taxon>Methanobacteriati</taxon>
        <taxon>Methanobacteriota</taxon>
        <taxon>Stenosarchaea group</taxon>
        <taxon>Halobacteria</taxon>
        <taxon>Halobacteriales</taxon>
        <taxon>Halobacteriaceae</taxon>
        <taxon>Halobacterium</taxon>
        <taxon>Halobacterium salinarum NRC-34001</taxon>
    </lineage>
</organism>
<proteinExistence type="inferred from homology"/>
<name>FAU1_HALSA</name>
<accession>Q9HMA9</accession>
<comment type="function">
    <text evidence="1">Probable RNase involved in rRNA stability through maturation and/or degradation of precursor rRNAs. Binds to RNA in loop regions with AU-rich sequences.</text>
</comment>
<comment type="similarity">
    <text evidence="1">Belongs to the FAU-1 family.</text>
</comment>
<dbReference type="EC" id="3.1.26.-" evidence="1"/>
<dbReference type="EMBL" id="AE004437">
    <property type="protein sequence ID" value="AAG20662.1"/>
    <property type="molecule type" value="Genomic_DNA"/>
</dbReference>
<dbReference type="PIR" id="B84412">
    <property type="entry name" value="B84412"/>
</dbReference>
<dbReference type="RefSeq" id="WP_010903965.1">
    <property type="nucleotide sequence ID" value="NC_002607.1"/>
</dbReference>
<dbReference type="SMR" id="Q9HMA9"/>
<dbReference type="STRING" id="64091.VNG_2627C"/>
<dbReference type="PaxDb" id="64091-VNG_2627C"/>
<dbReference type="DNASU" id="1448968"/>
<dbReference type="KEGG" id="hal:VNG_2627C"/>
<dbReference type="PATRIC" id="fig|64091.14.peg.2037"/>
<dbReference type="HOGENOM" id="CLU_044303_0_0_2"/>
<dbReference type="InParanoid" id="Q9HMA9"/>
<dbReference type="OrthoDB" id="84798at2157"/>
<dbReference type="PhylomeDB" id="Q9HMA9"/>
<dbReference type="Proteomes" id="UP000000554">
    <property type="component" value="Chromosome"/>
</dbReference>
<dbReference type="GO" id="GO:0035925">
    <property type="term" value="F:mRNA 3'-UTR AU-rich region binding"/>
    <property type="evidence" value="ECO:0007669"/>
    <property type="project" value="UniProtKB-UniRule"/>
</dbReference>
<dbReference type="GO" id="GO:0016891">
    <property type="term" value="F:RNA endonuclease activity, producing 5'-phosphomonoesters"/>
    <property type="evidence" value="ECO:0007669"/>
    <property type="project" value="UniProtKB-UniRule"/>
</dbReference>
<dbReference type="GO" id="GO:0006364">
    <property type="term" value="P:rRNA processing"/>
    <property type="evidence" value="ECO:0007669"/>
    <property type="project" value="UniProtKB-UniRule"/>
</dbReference>
<dbReference type="Gene3D" id="2.40.380.10">
    <property type="entry name" value="FomD-like"/>
    <property type="match status" value="1"/>
</dbReference>
<dbReference type="HAMAP" id="MF_01910">
    <property type="entry name" value="RNA_binding_AU_1"/>
    <property type="match status" value="1"/>
</dbReference>
<dbReference type="InterPro" id="IPR007295">
    <property type="entry name" value="DUF402"/>
</dbReference>
<dbReference type="InterPro" id="IPR035930">
    <property type="entry name" value="FomD-like_sf"/>
</dbReference>
<dbReference type="InterPro" id="IPR050212">
    <property type="entry name" value="Ntdp-like"/>
</dbReference>
<dbReference type="InterPro" id="IPR016730">
    <property type="entry name" value="RNA-bd_FAU-1"/>
</dbReference>
<dbReference type="PANTHER" id="PTHR39159">
    <property type="match status" value="1"/>
</dbReference>
<dbReference type="PANTHER" id="PTHR39159:SF1">
    <property type="entry name" value="UPF0374 PROTEIN YGAC"/>
    <property type="match status" value="1"/>
</dbReference>
<dbReference type="Pfam" id="PF04167">
    <property type="entry name" value="DUF402"/>
    <property type="match status" value="1"/>
</dbReference>
<dbReference type="PIRSF" id="PIRSF018644">
    <property type="entry name" value="RNA-binding_FAU-1"/>
    <property type="match status" value="1"/>
</dbReference>
<dbReference type="SUPFAM" id="SSF159234">
    <property type="entry name" value="FomD-like"/>
    <property type="match status" value="1"/>
</dbReference>
<sequence length="471" mass="50002">MTRVRVRGIYATALTQLLRNAGLDVVAASPPIRARFPDADLGAAEPHADIRMTPDRQGVGITAHGDDHARAVRAVVADLPRDTFVWPDPVPRGAVFDAAVDHTVGGGAILDLGDDREAYLPFGAVDDHVTDGDTLRVAIRDPAPPWHDDRPTATSTITVSGALASLDRGVDALVAGAATDRAELARATELLDPDIPDNWGVYWEYDGADASLDARGTALDTLAARADRLEATLADADGGDTPGLVAAPDTTLWAWFGRETRCALDDHRRTVAATMPGHHRIKAGSDAASDAVDFAEALGASVDEFPFGAVTDQFGPSVGASIEIQHGKPDGALISLGRGEVTDRSAENARITVEREMTGGGTYDALGVAREAGDTATTRFTEGNWWYPTVYRSEDGERKGTYLNVCTPVEVFPDAVRYVDLHVDVIKHADGAVEIVDREELQDCVADGLVSEELAEKALSVAERVQSAVAE</sequence>
<protein>
    <recommendedName>
        <fullName evidence="1">Probable ribonuclease FAU-1</fullName>
        <ecNumber evidence="1">3.1.26.-</ecNumber>
    </recommendedName>
    <alternativeName>
        <fullName evidence="1">RNA-binding protein FAU-1</fullName>
    </alternativeName>
</protein>